<keyword id="KW-0002">3D-structure</keyword>
<keyword id="KW-0456">Lyase</keyword>
<keyword id="KW-0520">NAD</keyword>
<keyword id="KW-0547">Nucleotide-binding</keyword>
<keyword id="KW-1185">Reference proteome</keyword>
<dbReference type="EC" id="4.3.1.12" evidence="2"/>
<dbReference type="EMBL" id="BX950229">
    <property type="protein sequence ID" value="CAF30774.1"/>
    <property type="molecule type" value="Genomic_DNA"/>
</dbReference>
<dbReference type="RefSeq" id="WP_011171162.1">
    <property type="nucleotide sequence ID" value="NC_005791.1"/>
</dbReference>
<dbReference type="PDB" id="3C2Q">
    <property type="method" value="X-ray"/>
    <property type="resolution" value="2.00 A"/>
    <property type="chains" value="A/B=74-415"/>
</dbReference>
<dbReference type="PDBsum" id="3C2Q"/>
<dbReference type="SMR" id="Q6LXX7"/>
<dbReference type="STRING" id="267377.MMP1218"/>
<dbReference type="EnsemblBacteria" id="CAF30774">
    <property type="protein sequence ID" value="CAF30774"/>
    <property type="gene ID" value="MMP1218"/>
</dbReference>
<dbReference type="KEGG" id="mmp:MMP1218"/>
<dbReference type="PATRIC" id="fig|267377.15.peg.1251"/>
<dbReference type="eggNOG" id="arCOG04422">
    <property type="taxonomic scope" value="Archaea"/>
</dbReference>
<dbReference type="HOGENOM" id="CLU_056125_0_0_2"/>
<dbReference type="OrthoDB" id="64170at2157"/>
<dbReference type="EvolutionaryTrace" id="Q6LXX7"/>
<dbReference type="Proteomes" id="UP000000590">
    <property type="component" value="Chromosome"/>
</dbReference>
<dbReference type="CDD" id="cd12144">
    <property type="entry name" value="SDH_N_domain"/>
    <property type="match status" value="1"/>
</dbReference>
<dbReference type="Gene3D" id="2.40.420.10">
    <property type="entry name" value="conserved putative lor/sdh protein from methanococcus maripaludis s2 domain"/>
    <property type="match status" value="1"/>
</dbReference>
<dbReference type="Gene3D" id="3.40.50.10690">
    <property type="entry name" value="putative lor/sdh protein like domains"/>
    <property type="match status" value="1"/>
</dbReference>
<dbReference type="InterPro" id="IPR005239">
    <property type="entry name" value="ArgZ/ArgE-like"/>
</dbReference>
<dbReference type="InterPro" id="IPR048964">
    <property type="entry name" value="ArgZ/ArgE-like_C_1st"/>
</dbReference>
<dbReference type="InterPro" id="IPR048963">
    <property type="entry name" value="ArgZ/ArgE-like_C_2nd"/>
</dbReference>
<dbReference type="InterPro" id="IPR007545">
    <property type="entry name" value="LOR/SDH_bifunc_enz_cons_dom"/>
</dbReference>
<dbReference type="NCBIfam" id="TIGR00300">
    <property type="entry name" value="TIGR00300 family protein"/>
    <property type="match status" value="1"/>
</dbReference>
<dbReference type="Pfam" id="PF21571">
    <property type="entry name" value="ArgZ-like_C_1st"/>
    <property type="match status" value="1"/>
</dbReference>
<dbReference type="Pfam" id="PF21570">
    <property type="entry name" value="ArgZ-like_C_2nd"/>
    <property type="match status" value="1"/>
</dbReference>
<dbReference type="Pfam" id="PF04455">
    <property type="entry name" value="Saccharop_dh_N"/>
    <property type="match status" value="1"/>
</dbReference>
<feature type="chain" id="PRO_0000462113" description="Ornithine cyclodeaminase">
    <location>
        <begin position="1"/>
        <end position="415"/>
    </location>
</feature>
<feature type="binding site" evidence="1">
    <location>
        <position position="241"/>
    </location>
    <ligand>
        <name>NAD(+)</name>
        <dbReference type="ChEBI" id="CHEBI:57540"/>
    </ligand>
</feature>
<feature type="binding site" evidence="1">
    <location>
        <position position="242"/>
    </location>
    <ligand>
        <name>NAD(+)</name>
        <dbReference type="ChEBI" id="CHEBI:57540"/>
    </ligand>
</feature>
<feature type="binding site" evidence="1">
    <location>
        <position position="320"/>
    </location>
    <ligand>
        <name>NAD(+)</name>
        <dbReference type="ChEBI" id="CHEBI:57540"/>
    </ligand>
</feature>
<feature type="binding site" evidence="1">
    <location>
        <position position="352"/>
    </location>
    <ligand>
        <name>NAD(+)</name>
        <dbReference type="ChEBI" id="CHEBI:57540"/>
    </ligand>
</feature>
<feature type="binding site" evidence="1">
    <location>
        <position position="354"/>
    </location>
    <ligand>
        <name>NAD(+)</name>
        <dbReference type="ChEBI" id="CHEBI:57540"/>
    </ligand>
</feature>
<feature type="binding site" evidence="1">
    <location>
        <position position="355"/>
    </location>
    <ligand>
        <name>NAD(+)</name>
        <dbReference type="ChEBI" id="CHEBI:57540"/>
    </ligand>
</feature>
<feature type="binding site" evidence="1">
    <location>
        <position position="373"/>
    </location>
    <ligand>
        <name>NAD(+)</name>
        <dbReference type="ChEBI" id="CHEBI:57540"/>
    </ligand>
</feature>
<feature type="binding site" evidence="1">
    <location>
        <position position="396"/>
    </location>
    <ligand>
        <name>NAD(+)</name>
        <dbReference type="ChEBI" id="CHEBI:57540"/>
    </ligand>
</feature>
<feature type="binding site" evidence="1">
    <location>
        <position position="397"/>
    </location>
    <ligand>
        <name>NAD(+)</name>
        <dbReference type="ChEBI" id="CHEBI:57540"/>
    </ligand>
</feature>
<reference key="1">
    <citation type="journal article" date="2004" name="J. Bacteriol.">
        <title>Complete genome sequence of the genetically tractable hydrogenotrophic methanogen Methanococcus maripaludis.</title>
        <authorList>
            <person name="Hendrickson E.L."/>
            <person name="Kaul R."/>
            <person name="Zhou Y."/>
            <person name="Bovee D."/>
            <person name="Chapman P."/>
            <person name="Chung J."/>
            <person name="Conway de Macario E."/>
            <person name="Dodsworth J.A."/>
            <person name="Gillett W."/>
            <person name="Graham D.E."/>
            <person name="Hackett M."/>
            <person name="Haydock A.K."/>
            <person name="Kang A."/>
            <person name="Land M.L."/>
            <person name="Levy R."/>
            <person name="Lie T.J."/>
            <person name="Major T.A."/>
            <person name="Moore B.C."/>
            <person name="Porat I."/>
            <person name="Palmeiri A."/>
            <person name="Rouse G."/>
            <person name="Saenphimmachak C."/>
            <person name="Soell D."/>
            <person name="Van Dien S."/>
            <person name="Wang T."/>
            <person name="Whitman W.B."/>
            <person name="Xia Q."/>
            <person name="Zhang Y."/>
            <person name="Larimer F.W."/>
            <person name="Olson M.V."/>
            <person name="Leigh J.A."/>
        </authorList>
    </citation>
    <scope>NUCLEOTIDE SEQUENCE [LARGE SCALE GENOMIC DNA]</scope>
    <source>
        <strain>DSM 14266 / JCM 13030 / NBRC 101832 / S2 / LL</strain>
    </source>
</reference>
<reference key="2">
    <citation type="journal article" date="2019" name="Mol. Microbiol.">
        <title>Catabolic pathway of arginine in Anabaena involves a novel bifunctional enzyme that produces proline from arginine.</title>
        <authorList>
            <person name="Burnat M."/>
            <person name="Picossi S."/>
            <person name="Valladares A."/>
            <person name="Herrero A."/>
            <person name="Flores E."/>
        </authorList>
    </citation>
    <scope>FUNCTION</scope>
    <scope>CATALYTIC ACTIVITY</scope>
    <source>
        <strain>DSM 14266 / JCM 13030 / NBRC 101832 / S2 / LL</strain>
    </source>
</reference>
<reference evidence="6" key="3">
    <citation type="submission" date="2008-01" db="PDB data bank">
        <title>Crystal structure of conserved putative LOR/SDH protein from Methanococcus maripaludis S2.</title>
        <authorList>
            <person name="Duke N."/>
            <person name="Gu M."/>
            <person name="Mulligan R."/>
            <person name="Conrad B."/>
            <person name="Joachimiak A."/>
        </authorList>
    </citation>
    <scope>X-RAY CRYSTALLOGRAPHY (2.00 ANGSTROMS) OF 74-415</scope>
</reference>
<organism>
    <name type="scientific">Methanococcus maripaludis (strain DSM 14266 / JCM 13030 / NBRC 101832 / S2 / LL)</name>
    <dbReference type="NCBI Taxonomy" id="267377"/>
    <lineage>
        <taxon>Archaea</taxon>
        <taxon>Methanobacteriati</taxon>
        <taxon>Methanobacteriota</taxon>
        <taxon>Methanomada group</taxon>
        <taxon>Methanococci</taxon>
        <taxon>Methanococcales</taxon>
        <taxon>Methanococcaceae</taxon>
        <taxon>Methanococcus</taxon>
    </lineage>
</organism>
<proteinExistence type="evidence at protein level"/>
<protein>
    <recommendedName>
        <fullName evidence="3">Ornithine cyclodeaminase</fullName>
        <shortName evidence="4">OCD</shortName>
        <ecNumber evidence="2">4.3.1.12</ecNumber>
    </recommendedName>
    <alternativeName>
        <fullName evidence="3">Archaeal ornithine cyclodeaminase</fullName>
    </alternativeName>
    <alternativeName>
        <fullName evidence="3">Mls2</fullName>
    </alternativeName>
</protein>
<comment type="function">
    <text evidence="2">Catalyzes the conversion of ornithine to proline, with the release of ammonia.</text>
</comment>
<comment type="catalytic activity">
    <reaction evidence="2">
        <text>L-ornithine = L-proline + NH4(+)</text>
        <dbReference type="Rhea" id="RHEA:24368"/>
        <dbReference type="ChEBI" id="CHEBI:28938"/>
        <dbReference type="ChEBI" id="CHEBI:46911"/>
        <dbReference type="ChEBI" id="CHEBI:60039"/>
        <dbReference type="EC" id="4.3.1.12"/>
    </reaction>
</comment>
<comment type="cofactor">
    <cofactor evidence="1">
        <name>NAD(+)</name>
        <dbReference type="ChEBI" id="CHEBI:57540"/>
    </cofactor>
</comment>
<comment type="similarity">
    <text evidence="4">Belongs to the AgrE/ArgZ ornithine cyclodeaminase family.</text>
</comment>
<gene>
    <name evidence="5" type="ordered locus">MMP1218</name>
</gene>
<evidence type="ECO:0000250" key="1">
    <source>
        <dbReference type="UniProtKB" id="Q8YMD9"/>
    </source>
</evidence>
<evidence type="ECO:0000269" key="2">
    <source>
    </source>
</evidence>
<evidence type="ECO:0000303" key="3">
    <source>
    </source>
</evidence>
<evidence type="ECO:0000305" key="4"/>
<evidence type="ECO:0000312" key="5">
    <source>
        <dbReference type="EMBL" id="CAF30774.1"/>
    </source>
</evidence>
<evidence type="ECO:0007744" key="6">
    <source>
        <dbReference type="PDB" id="3C2Q"/>
    </source>
</evidence>
<sequence length="415" mass="45548">MFMREIELKGHIIDSFILAKVFDRTLELGGDYKVLEFDIGKKKIDTSYAKLLISGDTQQHLDQILEELQNVGANIPEIENANLKPALKDSVLPDGFYSTTNHPTHVKVNDEWIEVANPKMDAVIVVYPEEKRAETKVIRKVKKGDFVLIGHNGIRVMPPEKSREAGQLFEFMNSEVSSEKPKEAIIKRIAKEMHEIREEYKKTGTGGIAIVGGPAIIHTGGGPALAKMVELGYIQAILAGNALATHDIESALYGTSLGVNIKTAKPVTGGHKHHIYAINAINDAGNIKNAVESGVLKEGIMYQCIKNNIPYVLAGSIRDDGPIPDVITDSMVAQDKMRTTVMDKKMVIMLSTLLHSVATGNLMPSYIKTVCVDIQPSTVTKLMDRGTSQAIGVVTDVGVFLVLLLKELERLELQE</sequence>
<name>AOCD_METMP</name>
<accession>Q6LXX7</accession>